<name>SYV_MYCS5</name>
<keyword id="KW-0030">Aminoacyl-tRNA synthetase</keyword>
<keyword id="KW-0067">ATP-binding</keyword>
<keyword id="KW-0175">Coiled coil</keyword>
<keyword id="KW-0963">Cytoplasm</keyword>
<keyword id="KW-0436">Ligase</keyword>
<keyword id="KW-0547">Nucleotide-binding</keyword>
<keyword id="KW-0648">Protein biosynthesis</keyword>
<keyword id="KW-1185">Reference proteome</keyword>
<sequence>MQKIYNHQNVEDGIESKWREKKYFIDHNLDKKPFSILLPPPNVTGKLHLGHALDSYIPDTIIRFKKLSGYDVLWLPGMDHAGIATQSKVESELYKQNKLTRHDLGKEKFLAEVWKWKEIHEKLFRQQWQTLGLALDYSNEAFTLSKEVNEKVIKIFVELYNRGYIYKKNRAVSWDINLQTAISNIEVINKETPQKMYYIKYFFENSSEYLTIATTRVETMLSDVAVIANPKDKRYKNLKIKFLIHPITKKRLPLIFDEYVKIKFGSGLMKLSAHAEADIEIIEKLGLEVIETIDKNGYINAPDYQWHKMERFEAREKMAQFLEENNYLIKAEDSISNVSYSDRSNSVIETLMLPQWFIKMDHFRDLILKNLSSKEKIKFLPNRYKNNLKRWMNNVYDWNISRQLWWGHQIPAWYKDGKMKVQAESPGQGWVQDSDVLDTWFSSGIAAFSFFKWENDDAFFKRYYPSSLMVSGYDLIFFWISRMIFLSLEFTNQRPFKEVFMHGLIRDKDGRKMSKSLNNGIDPIEVVEKYGSDALRWFLITNTAPGMDIRYNQEKIESAWKISNKLYNVALYISSMPDNNLEAKSSKLSEQSKWILNKLSALNKQIQKVFKTYDFSIIGVEIYQFIFTDLSSWYIELIKSLNIKNEAMYVFKKILIMLHPFLPFTSDYLFNKLYNEELLEQSWPKFKRFKDSSEINLLIDAITKIRKYRDDNNISKKEKLYLCLKEKISKKNLNILLSLTNSEYKENKDFLIVLDNNSIFIEISQEQKQKQKQELEKKIAFCQSEITRAQNILSNQSFIAKAPKEKIKLEEDKLQRYKQELQIYLEELKWKY</sequence>
<gene>
    <name evidence="1" type="primary">valS</name>
    <name type="ordered locus">MS53_0298</name>
</gene>
<protein>
    <recommendedName>
        <fullName evidence="1">Valine--tRNA ligase</fullName>
        <ecNumber evidence="1">6.1.1.9</ecNumber>
    </recommendedName>
    <alternativeName>
        <fullName evidence="1">Valyl-tRNA synthetase</fullName>
        <shortName evidence="1">ValRS</shortName>
    </alternativeName>
</protein>
<evidence type="ECO:0000255" key="1">
    <source>
        <dbReference type="HAMAP-Rule" id="MF_02004"/>
    </source>
</evidence>
<proteinExistence type="inferred from homology"/>
<accession>Q4A6B0</accession>
<reference key="1">
    <citation type="journal article" date="2005" name="J. Bacteriol.">
        <title>Swine and poultry pathogens: the complete genome sequences of two strains of Mycoplasma hyopneumoniae and a strain of Mycoplasma synoviae.</title>
        <authorList>
            <person name="Vasconcelos A.T.R."/>
            <person name="Ferreira H.B."/>
            <person name="Bizarro C.V."/>
            <person name="Bonatto S.L."/>
            <person name="Carvalho M.O."/>
            <person name="Pinto P.M."/>
            <person name="Almeida D.F."/>
            <person name="Almeida L.G.P."/>
            <person name="Almeida R."/>
            <person name="Alves-Junior L."/>
            <person name="Assuncao E.N."/>
            <person name="Azevedo V.A.C."/>
            <person name="Bogo M.R."/>
            <person name="Brigido M.M."/>
            <person name="Brocchi M."/>
            <person name="Burity H.A."/>
            <person name="Camargo A.A."/>
            <person name="Camargo S.S."/>
            <person name="Carepo M.S."/>
            <person name="Carraro D.M."/>
            <person name="de Mattos Cascardo J.C."/>
            <person name="Castro L.A."/>
            <person name="Cavalcanti G."/>
            <person name="Chemale G."/>
            <person name="Collevatti R.G."/>
            <person name="Cunha C.W."/>
            <person name="Dallagiovanna B."/>
            <person name="Dambros B.P."/>
            <person name="Dellagostin O.A."/>
            <person name="Falcao C."/>
            <person name="Fantinatti-Garboggini F."/>
            <person name="Felipe M.S.S."/>
            <person name="Fiorentin L."/>
            <person name="Franco G.R."/>
            <person name="Freitas N.S.A."/>
            <person name="Frias D."/>
            <person name="Grangeiro T.B."/>
            <person name="Grisard E.C."/>
            <person name="Guimaraes C.T."/>
            <person name="Hungria M."/>
            <person name="Jardim S.N."/>
            <person name="Krieger M.A."/>
            <person name="Laurino J.P."/>
            <person name="Lima L.F.A."/>
            <person name="Lopes M.I."/>
            <person name="Loreto E.L.S."/>
            <person name="Madeira H.M.F."/>
            <person name="Manfio G.P."/>
            <person name="Maranhao A.Q."/>
            <person name="Martinkovics C.T."/>
            <person name="Medeiros S.R.B."/>
            <person name="Moreira M.A.M."/>
            <person name="Neiva M."/>
            <person name="Ramalho-Neto C.E."/>
            <person name="Nicolas M.F."/>
            <person name="Oliveira S.C."/>
            <person name="Paixao R.F.C."/>
            <person name="Pedrosa F.O."/>
            <person name="Pena S.D.J."/>
            <person name="Pereira M."/>
            <person name="Pereira-Ferrari L."/>
            <person name="Piffer I."/>
            <person name="Pinto L.S."/>
            <person name="Potrich D.P."/>
            <person name="Salim A.C.M."/>
            <person name="Santos F.R."/>
            <person name="Schmitt R."/>
            <person name="Schneider M.P.C."/>
            <person name="Schrank A."/>
            <person name="Schrank I.S."/>
            <person name="Schuck A.F."/>
            <person name="Seuanez H.N."/>
            <person name="Silva D.W."/>
            <person name="Silva R."/>
            <person name="Silva S.C."/>
            <person name="Soares C.M.A."/>
            <person name="Souza K.R.L."/>
            <person name="Souza R.C."/>
            <person name="Staats C.C."/>
            <person name="Steffens M.B.R."/>
            <person name="Teixeira S.M.R."/>
            <person name="Urmenyi T.P."/>
            <person name="Vainstein M.H."/>
            <person name="Zuccherato L.W."/>
            <person name="Simpson A.J.G."/>
            <person name="Zaha A."/>
        </authorList>
    </citation>
    <scope>NUCLEOTIDE SEQUENCE [LARGE SCALE GENOMIC DNA]</scope>
    <source>
        <strain>53</strain>
    </source>
</reference>
<feature type="chain" id="PRO_0000224515" description="Valine--tRNA ligase">
    <location>
        <begin position="1"/>
        <end position="832"/>
    </location>
</feature>
<feature type="coiled-coil region" evidence="1">
    <location>
        <begin position="760"/>
        <end position="831"/>
    </location>
</feature>
<feature type="short sequence motif" description="'HIGH' region">
    <location>
        <begin position="41"/>
        <end position="51"/>
    </location>
</feature>
<feature type="short sequence motif" description="'KMSKS' region">
    <location>
        <begin position="512"/>
        <end position="516"/>
    </location>
</feature>
<feature type="binding site" evidence="1">
    <location>
        <position position="515"/>
    </location>
    <ligand>
        <name>ATP</name>
        <dbReference type="ChEBI" id="CHEBI:30616"/>
    </ligand>
</feature>
<dbReference type="EC" id="6.1.1.9" evidence="1"/>
<dbReference type="EMBL" id="AE017245">
    <property type="protein sequence ID" value="AAZ43711.1"/>
    <property type="molecule type" value="Genomic_DNA"/>
</dbReference>
<dbReference type="RefSeq" id="WP_011283443.1">
    <property type="nucleotide sequence ID" value="NC_007294.1"/>
</dbReference>
<dbReference type="SMR" id="Q4A6B0"/>
<dbReference type="STRING" id="262723.MS53_0298"/>
<dbReference type="KEGG" id="msy:MS53_0298"/>
<dbReference type="eggNOG" id="COG0525">
    <property type="taxonomic scope" value="Bacteria"/>
</dbReference>
<dbReference type="HOGENOM" id="CLU_001493_0_2_14"/>
<dbReference type="OrthoDB" id="9810365at2"/>
<dbReference type="Proteomes" id="UP000000549">
    <property type="component" value="Chromosome"/>
</dbReference>
<dbReference type="GO" id="GO:0005829">
    <property type="term" value="C:cytosol"/>
    <property type="evidence" value="ECO:0007669"/>
    <property type="project" value="TreeGrafter"/>
</dbReference>
<dbReference type="GO" id="GO:0002161">
    <property type="term" value="F:aminoacyl-tRNA deacylase activity"/>
    <property type="evidence" value="ECO:0007669"/>
    <property type="project" value="InterPro"/>
</dbReference>
<dbReference type="GO" id="GO:0005524">
    <property type="term" value="F:ATP binding"/>
    <property type="evidence" value="ECO:0007669"/>
    <property type="project" value="UniProtKB-UniRule"/>
</dbReference>
<dbReference type="GO" id="GO:0004832">
    <property type="term" value="F:valine-tRNA ligase activity"/>
    <property type="evidence" value="ECO:0007669"/>
    <property type="project" value="UniProtKB-UniRule"/>
</dbReference>
<dbReference type="GO" id="GO:0006438">
    <property type="term" value="P:valyl-tRNA aminoacylation"/>
    <property type="evidence" value="ECO:0007669"/>
    <property type="project" value="UniProtKB-UniRule"/>
</dbReference>
<dbReference type="CDD" id="cd07962">
    <property type="entry name" value="Anticodon_Ia_Val"/>
    <property type="match status" value="1"/>
</dbReference>
<dbReference type="CDD" id="cd00817">
    <property type="entry name" value="ValRS_core"/>
    <property type="match status" value="1"/>
</dbReference>
<dbReference type="FunFam" id="3.40.50.620:FF:000020">
    <property type="entry name" value="Valine--tRNA ligase, mitochondrial"/>
    <property type="match status" value="1"/>
</dbReference>
<dbReference type="Gene3D" id="3.40.50.620">
    <property type="entry name" value="HUPs"/>
    <property type="match status" value="2"/>
</dbReference>
<dbReference type="Gene3D" id="1.10.730.10">
    <property type="entry name" value="Isoleucyl-tRNA Synthetase, Domain 1"/>
    <property type="match status" value="1"/>
</dbReference>
<dbReference type="Gene3D" id="1.10.287.380">
    <property type="entry name" value="Valyl-tRNA synthetase, C-terminal domain"/>
    <property type="match status" value="1"/>
</dbReference>
<dbReference type="HAMAP" id="MF_02004">
    <property type="entry name" value="Val_tRNA_synth_type1"/>
    <property type="match status" value="1"/>
</dbReference>
<dbReference type="InterPro" id="IPR001412">
    <property type="entry name" value="aa-tRNA-synth_I_CS"/>
</dbReference>
<dbReference type="InterPro" id="IPR002300">
    <property type="entry name" value="aa-tRNA-synth_Ia"/>
</dbReference>
<dbReference type="InterPro" id="IPR033705">
    <property type="entry name" value="Anticodon_Ia_Val"/>
</dbReference>
<dbReference type="InterPro" id="IPR013155">
    <property type="entry name" value="M/V/L/I-tRNA-synth_anticd-bd"/>
</dbReference>
<dbReference type="InterPro" id="IPR014729">
    <property type="entry name" value="Rossmann-like_a/b/a_fold"/>
</dbReference>
<dbReference type="InterPro" id="IPR010978">
    <property type="entry name" value="tRNA-bd_arm"/>
</dbReference>
<dbReference type="InterPro" id="IPR009080">
    <property type="entry name" value="tRNAsynth_Ia_anticodon-bd"/>
</dbReference>
<dbReference type="InterPro" id="IPR037118">
    <property type="entry name" value="Val-tRNA_synth_C_sf"/>
</dbReference>
<dbReference type="InterPro" id="IPR019499">
    <property type="entry name" value="Val-tRNA_synth_tRNA-bd"/>
</dbReference>
<dbReference type="InterPro" id="IPR009008">
    <property type="entry name" value="Val/Leu/Ile-tRNA-synth_edit"/>
</dbReference>
<dbReference type="InterPro" id="IPR002303">
    <property type="entry name" value="Valyl-tRNA_ligase"/>
</dbReference>
<dbReference type="NCBIfam" id="NF004349">
    <property type="entry name" value="PRK05729.1"/>
    <property type="match status" value="1"/>
</dbReference>
<dbReference type="NCBIfam" id="TIGR00422">
    <property type="entry name" value="valS"/>
    <property type="match status" value="1"/>
</dbReference>
<dbReference type="PANTHER" id="PTHR11946:SF93">
    <property type="entry name" value="VALINE--TRNA LIGASE, CHLOROPLASTIC_MITOCHONDRIAL 2"/>
    <property type="match status" value="1"/>
</dbReference>
<dbReference type="PANTHER" id="PTHR11946">
    <property type="entry name" value="VALYL-TRNA SYNTHETASES"/>
    <property type="match status" value="1"/>
</dbReference>
<dbReference type="Pfam" id="PF08264">
    <property type="entry name" value="Anticodon_1"/>
    <property type="match status" value="1"/>
</dbReference>
<dbReference type="Pfam" id="PF00133">
    <property type="entry name" value="tRNA-synt_1"/>
    <property type="match status" value="2"/>
</dbReference>
<dbReference type="Pfam" id="PF10458">
    <property type="entry name" value="Val_tRNA-synt_C"/>
    <property type="match status" value="1"/>
</dbReference>
<dbReference type="PRINTS" id="PR00986">
    <property type="entry name" value="TRNASYNTHVAL"/>
</dbReference>
<dbReference type="SUPFAM" id="SSF47323">
    <property type="entry name" value="Anticodon-binding domain of a subclass of class I aminoacyl-tRNA synthetases"/>
    <property type="match status" value="1"/>
</dbReference>
<dbReference type="SUPFAM" id="SSF52374">
    <property type="entry name" value="Nucleotidylyl transferase"/>
    <property type="match status" value="1"/>
</dbReference>
<dbReference type="SUPFAM" id="SSF46589">
    <property type="entry name" value="tRNA-binding arm"/>
    <property type="match status" value="1"/>
</dbReference>
<dbReference type="SUPFAM" id="SSF50677">
    <property type="entry name" value="ValRS/IleRS/LeuRS editing domain"/>
    <property type="match status" value="1"/>
</dbReference>
<dbReference type="PROSITE" id="PS00178">
    <property type="entry name" value="AA_TRNA_LIGASE_I"/>
    <property type="match status" value="1"/>
</dbReference>
<organism>
    <name type="scientific">Mycoplasmopsis synoviae (strain 53)</name>
    <name type="common">Mycoplasma synoviae</name>
    <dbReference type="NCBI Taxonomy" id="262723"/>
    <lineage>
        <taxon>Bacteria</taxon>
        <taxon>Bacillati</taxon>
        <taxon>Mycoplasmatota</taxon>
        <taxon>Mycoplasmoidales</taxon>
        <taxon>Metamycoplasmataceae</taxon>
        <taxon>Mycoplasmopsis</taxon>
    </lineage>
</organism>
<comment type="function">
    <text evidence="1">Catalyzes the attachment of valine to tRNA(Val). As ValRS can inadvertently accommodate and process structurally similar amino acids such as threonine, to avoid such errors, it has a 'posttransfer' editing activity that hydrolyzes mischarged Thr-tRNA(Val) in a tRNA-dependent manner.</text>
</comment>
<comment type="catalytic activity">
    <reaction evidence="1">
        <text>tRNA(Val) + L-valine + ATP = L-valyl-tRNA(Val) + AMP + diphosphate</text>
        <dbReference type="Rhea" id="RHEA:10704"/>
        <dbReference type="Rhea" id="RHEA-COMP:9672"/>
        <dbReference type="Rhea" id="RHEA-COMP:9708"/>
        <dbReference type="ChEBI" id="CHEBI:30616"/>
        <dbReference type="ChEBI" id="CHEBI:33019"/>
        <dbReference type="ChEBI" id="CHEBI:57762"/>
        <dbReference type="ChEBI" id="CHEBI:78442"/>
        <dbReference type="ChEBI" id="CHEBI:78537"/>
        <dbReference type="ChEBI" id="CHEBI:456215"/>
        <dbReference type="EC" id="6.1.1.9"/>
    </reaction>
</comment>
<comment type="subunit">
    <text evidence="1">Monomer.</text>
</comment>
<comment type="subcellular location">
    <subcellularLocation>
        <location evidence="1">Cytoplasm</location>
    </subcellularLocation>
</comment>
<comment type="domain">
    <text evidence="1">ValRS has two distinct active sites: one for aminoacylation and one for editing. The misactivated threonine is translocated from the active site to the editing site.</text>
</comment>
<comment type="domain">
    <text evidence="1">The C-terminal coiled-coil domain is crucial for aminoacylation activity.</text>
</comment>
<comment type="similarity">
    <text evidence="1">Belongs to the class-I aminoacyl-tRNA synthetase family. ValS type 1 subfamily.</text>
</comment>